<evidence type="ECO:0000250" key="1">
    <source>
        <dbReference type="UniProtKB" id="Q47N06"/>
    </source>
</evidence>
<evidence type="ECO:0000255" key="2"/>
<evidence type="ECO:0000255" key="3">
    <source>
        <dbReference type="PROSITE-ProRule" id="PRU00523"/>
    </source>
</evidence>
<evidence type="ECO:0000255" key="4">
    <source>
        <dbReference type="PROSITE-ProRule" id="PRU01349"/>
    </source>
</evidence>
<evidence type="ECO:0000255" key="5">
    <source>
        <dbReference type="PROSITE-ProRule" id="PRU01352"/>
    </source>
</evidence>
<evidence type="ECO:0000256" key="6">
    <source>
        <dbReference type="SAM" id="MobiDB-lite"/>
    </source>
</evidence>
<evidence type="ECO:0000269" key="7">
    <source>
    </source>
</evidence>
<evidence type="ECO:0000269" key="8">
    <source>
    </source>
</evidence>
<evidence type="ECO:0000269" key="9">
    <source>
    </source>
</evidence>
<evidence type="ECO:0000303" key="10">
    <source>
    </source>
</evidence>
<evidence type="ECO:0000305" key="11"/>
<evidence type="ECO:0000305" key="12">
    <source>
    </source>
</evidence>
<evidence type="ECO:0000312" key="13">
    <source>
        <dbReference type="EMBL" id="BAB03955.1"/>
    </source>
</evidence>
<evidence type="ECO:0000312" key="14">
    <source>
        <dbReference type="Proteomes" id="UP000001258"/>
    </source>
</evidence>
<evidence type="ECO:0007744" key="15">
    <source>
        <dbReference type="PDB" id="1W9S"/>
    </source>
</evidence>
<evidence type="ECO:0007744" key="16">
    <source>
        <dbReference type="PDB" id="1W9T"/>
    </source>
</evidence>
<evidence type="ECO:0007744" key="17">
    <source>
        <dbReference type="PDB" id="1W9W"/>
    </source>
</evidence>
<evidence type="ECO:0007744" key="18">
    <source>
        <dbReference type="PDB" id="5T49"/>
    </source>
</evidence>
<evidence type="ECO:0007744" key="19">
    <source>
        <dbReference type="PDB" id="5T4A"/>
    </source>
</evidence>
<evidence type="ECO:0007744" key="20">
    <source>
        <dbReference type="PDB" id="5T4C"/>
    </source>
</evidence>
<evidence type="ECO:0007744" key="21">
    <source>
        <dbReference type="PDB" id="5T4G"/>
    </source>
</evidence>
<evidence type="ECO:0007744" key="22">
    <source>
        <dbReference type="PDB" id="5T7A"/>
    </source>
</evidence>
<evidence type="ECO:0007744" key="23">
    <source>
        <dbReference type="PDB" id="5UPI"/>
    </source>
</evidence>
<evidence type="ECO:0007744" key="24">
    <source>
        <dbReference type="PDB" id="5UPM"/>
    </source>
</evidence>
<evidence type="ECO:0007744" key="25">
    <source>
        <dbReference type="PDB" id="5UPN"/>
    </source>
</evidence>
<evidence type="ECO:0007744" key="26">
    <source>
        <dbReference type="PDB" id="5UPO"/>
    </source>
</evidence>
<evidence type="ECO:0007744" key="27">
    <source>
        <dbReference type="PDB" id="5V1W"/>
    </source>
</evidence>
<evidence type="ECO:0007829" key="28">
    <source>
        <dbReference type="PDB" id="1W9S"/>
    </source>
</evidence>
<evidence type="ECO:0007829" key="29">
    <source>
        <dbReference type="PDB" id="5T4A"/>
    </source>
</evidence>
<evidence type="ECO:0007829" key="30">
    <source>
        <dbReference type="PDB" id="5T7A"/>
    </source>
</evidence>
<evidence type="ECO:0007829" key="31">
    <source>
        <dbReference type="PDB" id="5UPI"/>
    </source>
</evidence>
<feature type="signal peptide" evidence="2">
    <location>
        <begin position="1"/>
        <end position="25"/>
    </location>
</feature>
<feature type="chain" id="PRO_5004328750" description="Glucan endo-1,3-beta-D-glucosidase">
    <location>
        <begin position="26"/>
        <end position="1020"/>
    </location>
</feature>
<feature type="domain" description="GH81" evidence="5">
    <location>
        <begin position="28"/>
        <end position="722"/>
    </location>
</feature>
<feature type="domain" description="CBM6" evidence="3">
    <location>
        <begin position="796"/>
        <end position="922"/>
    </location>
</feature>
<feature type="domain" description="CBM56" evidence="4">
    <location>
        <begin position="928"/>
        <end position="1020"/>
    </location>
</feature>
<feature type="region of interest" description="beta-sandwich subdomain" evidence="5">
    <location>
        <begin position="28"/>
        <end position="251"/>
    </location>
</feature>
<feature type="region of interest" description="alpha/beta subdomain" evidence="5">
    <location>
        <begin position="252"/>
        <end position="350"/>
    </location>
</feature>
<feature type="region of interest" description="(alpha/beta)6 barrel subdomain" evidence="5">
    <location>
        <begin position="360"/>
        <end position="722"/>
    </location>
</feature>
<feature type="region of interest" description="Disordered" evidence="6">
    <location>
        <begin position="771"/>
        <end position="790"/>
    </location>
</feature>
<feature type="active site" evidence="5 12">
    <location>
        <position position="466"/>
    </location>
</feature>
<feature type="active site" evidence="5 12">
    <location>
        <position position="542"/>
    </location>
</feature>
<feature type="active site" evidence="5">
    <location>
        <position position="546"/>
    </location>
</feature>
<feature type="binding site" evidence="8 20 21 26">
    <location>
        <position position="387"/>
    </location>
    <ligand>
        <name>(1,3-beta-D-glucosyl)n</name>
        <dbReference type="ChEBI" id="CHEBI:37671"/>
    </ligand>
</feature>
<feature type="binding site" evidence="8 20 21 26">
    <location>
        <position position="391"/>
    </location>
    <ligand>
        <name>(1,3-beta-D-glucosyl)n</name>
        <dbReference type="ChEBI" id="CHEBI:37671"/>
    </ligand>
</feature>
<feature type="binding site" evidence="8 19 20 23 24 25 26 27">
    <location>
        <position position="458"/>
    </location>
    <ligand>
        <name>(1,3-beta-D-glucosyl)n</name>
        <dbReference type="ChEBI" id="CHEBI:37671"/>
    </ligand>
</feature>
<feature type="binding site" evidence="8 20 21 26">
    <location>
        <position position="466"/>
    </location>
    <ligand>
        <name>(1,3-beta-D-glucosyl)n</name>
        <dbReference type="ChEBI" id="CHEBI:37671"/>
    </ligand>
</feature>
<feature type="binding site" evidence="8 20 21 26">
    <location>
        <position position="470"/>
    </location>
    <ligand>
        <name>(1,3-beta-D-glucosyl)n</name>
        <dbReference type="ChEBI" id="CHEBI:37671"/>
    </ligand>
</feature>
<feature type="binding site" evidence="8 19 20 23 24 25 26 27">
    <location>
        <position position="530"/>
    </location>
    <ligand>
        <name>(1,3-beta-D-glucosyl)n</name>
        <dbReference type="ChEBI" id="CHEBI:37671"/>
    </ligand>
</feature>
<feature type="binding site" evidence="8 20 23 24 25 26 27">
    <location>
        <position position="540"/>
    </location>
    <ligand>
        <name>(1,3-beta-D-glucosyl)n</name>
        <dbReference type="ChEBI" id="CHEBI:37671"/>
    </ligand>
</feature>
<feature type="binding site" evidence="8 20 21 26">
    <location>
        <position position="542"/>
    </location>
    <ligand>
        <name>(1,3-beta-D-glucosyl)n</name>
        <dbReference type="ChEBI" id="CHEBI:37671"/>
    </ligand>
</feature>
<feature type="binding site" evidence="8 20 21 26">
    <location>
        <position position="546"/>
    </location>
    <ligand>
        <name>(1,3-beta-D-glucosyl)n</name>
        <dbReference type="ChEBI" id="CHEBI:37671"/>
    </ligand>
</feature>
<feature type="binding site" evidence="8 20 21 26">
    <location>
        <position position="699"/>
    </location>
    <ligand>
        <name>(1,3-beta-D-glucosyl)n</name>
        <dbReference type="ChEBI" id="CHEBI:37671"/>
    </ligand>
</feature>
<feature type="binding site" evidence="8 20 21 26">
    <location>
        <position position="704"/>
    </location>
    <ligand>
        <name>(1,3-beta-D-glucosyl)n</name>
        <dbReference type="ChEBI" id="CHEBI:37671"/>
    </ligand>
</feature>
<feature type="binding site" evidence="7 16 17">
    <location>
        <position position="812"/>
    </location>
    <ligand>
        <name>(1,3-beta-D-glucosyl)n</name>
        <dbReference type="ChEBI" id="CHEBI:37671"/>
    </ligand>
</feature>
<feature type="binding site" evidence="7 16 17">
    <location>
        <position position="825"/>
    </location>
    <ligand>
        <name>(1,3-beta-D-glucosyl)n</name>
        <dbReference type="ChEBI" id="CHEBI:37671"/>
    </ligand>
</feature>
<feature type="binding site" evidence="7 17">
    <location>
        <position position="853"/>
    </location>
    <ligand>
        <name>(1,3-beta-D-glucosyl)n</name>
        <dbReference type="ChEBI" id="CHEBI:37671"/>
    </ligand>
</feature>
<feature type="binding site" evidence="7 17">
    <location>
        <position position="878"/>
    </location>
    <ligand>
        <name>(1,3-beta-D-glucosyl)n</name>
        <dbReference type="ChEBI" id="CHEBI:37671"/>
    </ligand>
</feature>
<feature type="binding site" evidence="7 16 17">
    <location>
        <position position="912"/>
    </location>
    <ligand>
        <name>(1,3-beta-D-glucosyl)n</name>
        <dbReference type="ChEBI" id="CHEBI:37671"/>
    </ligand>
</feature>
<feature type="binding site" evidence="7 16 17">
    <location>
        <position position="915"/>
    </location>
    <ligand>
        <name>(1,3-beta-D-glucosyl)n</name>
        <dbReference type="ChEBI" id="CHEBI:37671"/>
    </ligand>
</feature>
<feature type="mutagenesis site" description="Abolishes enzyme activity." evidence="8">
    <original>E</original>
    <variation>Q</variation>
    <location>
        <position position="542"/>
    </location>
</feature>
<feature type="strand" evidence="31">
    <location>
        <begin position="29"/>
        <end position="32"/>
    </location>
</feature>
<feature type="strand" evidence="31">
    <location>
        <begin position="35"/>
        <end position="40"/>
    </location>
</feature>
<feature type="helix" evidence="31">
    <location>
        <begin position="52"/>
        <end position="56"/>
    </location>
</feature>
<feature type="turn" evidence="31">
    <location>
        <begin position="80"/>
        <end position="82"/>
    </location>
</feature>
<feature type="helix" evidence="31">
    <location>
        <begin position="83"/>
        <end position="86"/>
    </location>
</feature>
<feature type="strand" evidence="31">
    <location>
        <begin position="87"/>
        <end position="89"/>
    </location>
</feature>
<feature type="strand" evidence="31">
    <location>
        <begin position="99"/>
        <end position="103"/>
    </location>
</feature>
<feature type="strand" evidence="31">
    <location>
        <begin position="106"/>
        <end position="110"/>
    </location>
</feature>
<feature type="helix" evidence="31">
    <location>
        <begin position="114"/>
        <end position="116"/>
    </location>
</feature>
<feature type="strand" evidence="31">
    <location>
        <begin position="118"/>
        <end position="122"/>
    </location>
</feature>
<feature type="turn" evidence="31">
    <location>
        <begin position="123"/>
        <end position="126"/>
    </location>
</feature>
<feature type="strand" evidence="31">
    <location>
        <begin position="127"/>
        <end position="131"/>
    </location>
</feature>
<feature type="strand" evidence="31">
    <location>
        <begin position="137"/>
        <end position="142"/>
    </location>
</feature>
<feature type="strand" evidence="31">
    <location>
        <begin position="149"/>
        <end position="156"/>
    </location>
</feature>
<feature type="strand" evidence="31">
    <location>
        <begin position="158"/>
        <end position="167"/>
    </location>
</feature>
<feature type="strand" evidence="31">
    <location>
        <begin position="170"/>
        <end position="177"/>
    </location>
</feature>
<feature type="strand" evidence="31">
    <location>
        <begin position="181"/>
        <end position="190"/>
    </location>
</feature>
<feature type="strand" evidence="31">
    <location>
        <begin position="192"/>
        <end position="195"/>
    </location>
</feature>
<feature type="strand" evidence="31">
    <location>
        <begin position="201"/>
        <end position="205"/>
    </location>
</feature>
<feature type="strand" evidence="31">
    <location>
        <begin position="207"/>
        <end position="213"/>
    </location>
</feature>
<feature type="strand" evidence="31">
    <location>
        <begin position="219"/>
        <end position="223"/>
    </location>
</feature>
<feature type="strand" evidence="31">
    <location>
        <begin position="235"/>
        <end position="240"/>
    </location>
</feature>
<feature type="strand" evidence="31">
    <location>
        <begin position="243"/>
        <end position="249"/>
    </location>
</feature>
<feature type="strand" evidence="31">
    <location>
        <begin position="251"/>
        <end position="253"/>
    </location>
</feature>
<feature type="helix" evidence="31">
    <location>
        <begin position="255"/>
        <end position="264"/>
    </location>
</feature>
<feature type="strand" evidence="31">
    <location>
        <begin position="267"/>
        <end position="279"/>
    </location>
</feature>
<feature type="turn" evidence="31">
    <location>
        <begin position="280"/>
        <end position="283"/>
    </location>
</feature>
<feature type="strand" evidence="31">
    <location>
        <begin position="284"/>
        <end position="297"/>
    </location>
</feature>
<feature type="strand" evidence="31">
    <location>
        <begin position="304"/>
        <end position="308"/>
    </location>
</feature>
<feature type="helix" evidence="31">
    <location>
        <begin position="310"/>
        <end position="313"/>
    </location>
</feature>
<feature type="helix" evidence="31">
    <location>
        <begin position="318"/>
        <end position="323"/>
    </location>
</feature>
<feature type="strand" evidence="31">
    <location>
        <begin position="324"/>
        <end position="332"/>
    </location>
</feature>
<feature type="strand" evidence="31">
    <location>
        <begin position="335"/>
        <end position="350"/>
    </location>
</feature>
<feature type="helix" evidence="31">
    <location>
        <begin position="366"/>
        <end position="375"/>
    </location>
</feature>
<feature type="helix" evidence="31">
    <location>
        <begin position="376"/>
        <end position="378"/>
    </location>
</feature>
<feature type="helix" evidence="31">
    <location>
        <begin position="386"/>
        <end position="405"/>
    </location>
</feature>
<feature type="helix" evidence="31">
    <location>
        <begin position="409"/>
        <end position="426"/>
    </location>
</feature>
<feature type="strand" evidence="31">
    <location>
        <begin position="434"/>
        <end position="436"/>
    </location>
</feature>
<feature type="strand" evidence="31">
    <location>
        <begin position="438"/>
        <end position="445"/>
    </location>
</feature>
<feature type="turn" evidence="31">
    <location>
        <begin position="446"/>
        <end position="449"/>
    </location>
</feature>
<feature type="strand" evidence="31">
    <location>
        <begin position="450"/>
        <end position="455"/>
    </location>
</feature>
<feature type="turn" evidence="31">
    <location>
        <begin position="458"/>
        <end position="462"/>
    </location>
</feature>
<feature type="helix" evidence="31">
    <location>
        <begin position="467"/>
        <end position="484"/>
    </location>
</feature>
<feature type="turn" evidence="31">
    <location>
        <begin position="486"/>
        <end position="489"/>
    </location>
</feature>
<feature type="turn" evidence="31">
    <location>
        <begin position="491"/>
        <end position="494"/>
    </location>
</feature>
<feature type="helix" evidence="31">
    <location>
        <begin position="495"/>
        <end position="506"/>
    </location>
</feature>
<feature type="strand" evidence="31">
    <location>
        <begin position="512"/>
        <end position="514"/>
    </location>
</feature>
<feature type="turn" evidence="31">
    <location>
        <begin position="516"/>
        <end position="519"/>
    </location>
</feature>
<feature type="turn" evidence="31">
    <location>
        <begin position="522"/>
        <end position="524"/>
    </location>
</feature>
<feature type="strand" evidence="31">
    <location>
        <begin position="540"/>
        <end position="542"/>
    </location>
</feature>
<feature type="helix" evidence="31">
    <location>
        <begin position="544"/>
        <end position="561"/>
    </location>
</feature>
<feature type="helix" evidence="31">
    <location>
        <begin position="564"/>
        <end position="584"/>
    </location>
</feature>
<feature type="strand" evidence="31">
    <location>
        <begin position="603"/>
        <end position="612"/>
    </location>
</feature>
<feature type="helix" evidence="31">
    <location>
        <begin position="622"/>
        <end position="625"/>
    </location>
</feature>
<feature type="turn" evidence="31">
    <location>
        <begin position="626"/>
        <end position="628"/>
    </location>
</feature>
<feature type="helix" evidence="31">
    <location>
        <begin position="635"/>
        <end position="639"/>
    </location>
</feature>
<feature type="helix" evidence="31">
    <location>
        <begin position="642"/>
        <end position="656"/>
    </location>
</feature>
<feature type="helix" evidence="31">
    <location>
        <begin position="665"/>
        <end position="672"/>
    </location>
</feature>
<feature type="turn" evidence="31">
    <location>
        <begin position="673"/>
        <end position="675"/>
    </location>
</feature>
<feature type="helix" evidence="31">
    <location>
        <begin position="677"/>
        <end position="687"/>
    </location>
</feature>
<feature type="helix" evidence="29">
    <location>
        <begin position="688"/>
        <end position="690"/>
    </location>
</feature>
<feature type="strand" evidence="31">
    <location>
        <begin position="700"/>
        <end position="702"/>
    </location>
</feature>
<feature type="helix" evidence="31">
    <location>
        <begin position="708"/>
        <end position="721"/>
    </location>
</feature>
<feature type="strand" evidence="31">
    <location>
        <begin position="730"/>
        <end position="740"/>
    </location>
</feature>
<feature type="strand" evidence="31">
    <location>
        <begin position="743"/>
        <end position="750"/>
    </location>
</feature>
<feature type="strand" evidence="31">
    <location>
        <begin position="752"/>
        <end position="754"/>
    </location>
</feature>
<feature type="strand" evidence="31">
    <location>
        <begin position="756"/>
        <end position="760"/>
    </location>
</feature>
<feature type="strand" evidence="31">
    <location>
        <begin position="765"/>
        <end position="768"/>
    </location>
</feature>
<feature type="strand" evidence="31">
    <location>
        <begin position="772"/>
        <end position="775"/>
    </location>
</feature>
<feature type="strand" evidence="28">
    <location>
        <begin position="804"/>
        <end position="808"/>
    </location>
</feature>
<feature type="strand" evidence="28">
    <location>
        <begin position="810"/>
        <end position="813"/>
    </location>
</feature>
<feature type="strand" evidence="28">
    <location>
        <begin position="821"/>
        <end position="824"/>
    </location>
</feature>
<feature type="strand" evidence="28">
    <location>
        <begin position="831"/>
        <end position="841"/>
    </location>
</feature>
<feature type="strand" evidence="28">
    <location>
        <begin position="843"/>
        <end position="855"/>
    </location>
</feature>
<feature type="strand" evidence="28">
    <location>
        <begin position="857"/>
        <end position="865"/>
    </location>
</feature>
<feature type="strand" evidence="28">
    <location>
        <begin position="870"/>
        <end position="876"/>
    </location>
</feature>
<feature type="strand" evidence="28">
    <location>
        <begin position="880"/>
        <end position="894"/>
    </location>
</feature>
<feature type="strand" evidence="28">
    <location>
        <begin position="896"/>
        <end position="907"/>
    </location>
</feature>
<feature type="strand" evidence="28">
    <location>
        <begin position="915"/>
        <end position="922"/>
    </location>
</feature>
<feature type="strand" evidence="30">
    <location>
        <begin position="930"/>
        <end position="934"/>
    </location>
</feature>
<feature type="strand" evidence="30">
    <location>
        <begin position="937"/>
        <end position="942"/>
    </location>
</feature>
<feature type="strand" evidence="30">
    <location>
        <begin position="946"/>
        <end position="957"/>
    </location>
</feature>
<feature type="strand" evidence="30">
    <location>
        <begin position="962"/>
        <end position="968"/>
    </location>
</feature>
<feature type="strand" evidence="30">
    <location>
        <begin position="974"/>
        <end position="977"/>
    </location>
</feature>
<feature type="strand" evidence="30">
    <location>
        <begin position="979"/>
        <end position="981"/>
    </location>
</feature>
<feature type="strand" evidence="30">
    <location>
        <begin position="984"/>
        <end position="990"/>
    </location>
</feature>
<feature type="strand" evidence="30">
    <location>
        <begin position="997"/>
        <end position="1005"/>
    </location>
</feature>
<feature type="strand" evidence="30">
    <location>
        <begin position="1007"/>
        <end position="1012"/>
    </location>
</feature>
<feature type="strand" evidence="30">
    <location>
        <begin position="1016"/>
        <end position="1019"/>
    </location>
</feature>
<sequence>MKGKNVQLLFALVVIILLFPTGASASPHAVSVGKGSYATEFPEIDFGGINDPGFRDQQGEPPATIYRSDRVTGPMQTNSWWGSLAVDRFSMNQYPHPFSVRHRAEGLHVFYDAPHNMVVHENREAGTWHIHGAIGTDFTIKHSGTANFEQAVVDDYNDWYVRGLLENGAHQMAITYGVGSPYIFVEYEDGSAVLDFDIAPDVWEMNGHVIGFSTHDHKHYAAFAPPGQNWSGIGSKTLTNNADYIAIAKLPEKDGNMLAKFEQYAYSVVRDAVADWTYDEATGTVTTTFEVTTEAKVQGAPDGTIFALYPHQYRHLASSSENQLLQNYQYEIIRGTMIGLEGKRFTTELTYPGVLPSLPDLGDYDRERLIGYLHDATSDYPTGSDTYELGKYIGKLATLAPIADQMGEYELAEQFRGELKDILEDWLQATNASGQLKGKNLFYYNENWGTILGYHAAHSSATRINDHHFHYGYFVKAAAEIARADQEWAKSENWGGMIDLLIRDFMADRDDDLFPYLRMFDPYSGNSWADGLATFDAGNNQESSSEAMHAWTNVILWAEATGNKALRDRAIYLYTTEMSAINEYFFDVHQEIFPEEYGPEIVTINWGGKMDHATWWNSGKVEKYAINWLPFHGGSLYLGHHPDYVDRAYEELRRDIGSTDWNLWSNLVWMYRAFTNPDDALQQMEASIDDYGLFDPGNEKIIERGSTKAQTYHWIHNLAELGRVDPTVTANHPIYAVFNKNGNRTYIVYNFSDSPITVQFSDGHSIQVEPHSFNIGNGDGPTNPDPSEPDLKNPYERIQAEAYDAMSGIQTEGTDDDGGGDNIGWINDGDWVKYERVHFERDASSIEVRVASDTPGGRIEIRTGSPTGTLLGDVQVPNTGGWQQWQTVTGNVQIQPGTYDVYLVFKGSPEYDLMNVNWFVFRANGQGNGDSHTHPDYTAGIRGITGNEVTIFFAPTTEARYVDVHLKVNNGQQLNYRMTERNGEWERVVENLSSGDVLEYSFTYEKLGPQYTTEWFTYSR</sequence>
<accession>Q9KG76</accession>
<keyword id="KW-0002">3D-structure</keyword>
<keyword id="KW-0119">Carbohydrate metabolism</keyword>
<keyword id="KW-0961">Cell wall biogenesis/degradation</keyword>
<keyword id="KW-0326">Glycosidase</keyword>
<keyword id="KW-0378">Hydrolase</keyword>
<keyword id="KW-0624">Polysaccharide degradation</keyword>
<keyword id="KW-1185">Reference proteome</keyword>
<keyword id="KW-0964">Secreted</keyword>
<keyword id="KW-0732">Signal</keyword>
<gene>
    <name evidence="13" type="ordered locus">BH0236</name>
</gene>
<comment type="function">
    <text evidence="1 7 8 9">Cleaves internal linkages in 1,3-beta-glucan (PubMed:15501830, PubMed:28781080, PubMed:28827308). May contribute to plant biomass degradation (By similarity).</text>
</comment>
<comment type="catalytic activity">
    <reaction evidence="7 8 9">
        <text>Hydrolysis of (1-&gt;3)-beta-D-glucosidic linkages in (1-&gt;3)-beta-D-glucans.</text>
        <dbReference type="EC" id="3.2.1.39"/>
    </reaction>
</comment>
<comment type="subcellular location">
    <subcellularLocation>
        <location evidence="1">Secreted</location>
    </subcellularLocation>
</comment>
<comment type="domain">
    <text evidence="7 9">The CBM6 domain binds the non-reducing ends of beta-glucan; this domain may therefore target the enzyme to polysaccharide termini in damaged regions of the plant cell wall susceptible to catalytic attack.</text>
</comment>
<comment type="domain">
    <text evidence="9">The CBM56 domain modulates binding affinity for beta-glucan and aids binding to insoluble beta-glucan.</text>
</comment>
<comment type="similarity">
    <text evidence="5 11">Belongs to the glycosyl hydrolase 81 family.</text>
</comment>
<reference evidence="14" key="1">
    <citation type="journal article" date="2000" name="Nucleic Acids Res.">
        <title>Complete genome sequence of the alkaliphilic bacterium Bacillus halodurans and genomic sequence comparison with Bacillus subtilis.</title>
        <authorList>
            <person name="Takami H."/>
            <person name="Nakasone K."/>
            <person name="Takaki Y."/>
            <person name="Maeno G."/>
            <person name="Sasaki R."/>
            <person name="Masui N."/>
            <person name="Fuji F."/>
            <person name="Hirama C."/>
            <person name="Nakamura Y."/>
            <person name="Ogasawara N."/>
            <person name="Kuhara S."/>
            <person name="Horikoshi K."/>
        </authorList>
    </citation>
    <scope>NUCLEOTIDE SEQUENCE [LARGE SCALE GENOMIC DNA]</scope>
    <source>
        <strain evidence="14">ATCC BAA-125 / DSM 18197 / FERM 7344 / JCM 9153 / C-125</strain>
    </source>
</reference>
<reference evidence="15 16 17" key="2">
    <citation type="journal article" date="2005" name="J. Biol. Chem.">
        <title>Family 6 carbohydrate binding modules recognize the non-reducing end of beta-1,3-linked glucans by presenting a unique ligand binding surface.</title>
        <authorList>
            <person name="van Bueren A.L."/>
            <person name="Morland C."/>
            <person name="Gilbert H.J."/>
            <person name="Boraston A.B."/>
        </authorList>
    </citation>
    <scope>X-RAY CRYSTALLOGRAPHY (1.59 ANGSTROMS) OF 790-925 IN COMPLEX WITH BETA-GLUCAN</scope>
    <scope>FUNCTION</scope>
    <scope>CATALYTIC ACTIVITY</scope>
    <scope>DOMAIN</scope>
</reference>
<reference evidence="22" key="3">
    <citation type="journal article" date="2017" name="J. Biol. Chem.">
        <title>Properties of a family 56 carbohydrate-binding module and its role in the recognition and hydrolysis of beta-1,3-glucan.</title>
        <authorList>
            <person name="Hettle A."/>
            <person name="Fillo A."/>
            <person name="Abe K."/>
            <person name="Massel P."/>
            <person name="Pluvinage B."/>
            <person name="Langelaan D.N."/>
            <person name="Smith S.P."/>
            <person name="Boraston A.B."/>
        </authorList>
    </citation>
    <scope>X-RAY CRYSTALLOGRAPHY (1.60 ANGSTROMS) OF 926-1020</scope>
    <scope>FUNCTION</scope>
    <scope>CATALYTIC ACTIVITY</scope>
    <scope>DOMAIN</scope>
</reference>
<reference evidence="18 19 20 21 23 24 25 26 27" key="4">
    <citation type="journal article" date="2017" name="Structure">
        <title>Structural Analysis of a Family 81 Glycoside Hydrolase Implicates Its Recognition of beta-1,3-Glucan Quaternary Structure.</title>
        <authorList>
            <person name="Pluvinage B."/>
            <person name="Fillo A."/>
            <person name="Massel P."/>
            <person name="Boraston A.B."/>
        </authorList>
    </citation>
    <scope>X-RAY CRYSTALLOGRAPHY (1.65 ANGSTROMS) OF 28-789 IN COMPLEX WITH BETA-GLUCAN</scope>
    <scope>FUNCTION</scope>
    <scope>CATALYTIC ACTIVITY</scope>
    <scope>MUTAGENESIS OF GLU-542</scope>
</reference>
<organism>
    <name type="scientific">Halalkalibacterium halodurans (strain ATCC BAA-125 / DSM 18197 / FERM 7344 / JCM 9153 / C-125)</name>
    <name type="common">Bacillus halodurans</name>
    <dbReference type="NCBI Taxonomy" id="272558"/>
    <lineage>
        <taxon>Bacteria</taxon>
        <taxon>Bacillati</taxon>
        <taxon>Bacillota</taxon>
        <taxon>Bacilli</taxon>
        <taxon>Bacillales</taxon>
        <taxon>Bacillaceae</taxon>
        <taxon>Halalkalibacterium (ex Joshi et al. 2022)</taxon>
    </lineage>
</organism>
<protein>
    <recommendedName>
        <fullName evidence="11">Glucan endo-1,3-beta-D-glucosidase</fullName>
        <shortName evidence="11">Endo-1,3-beta-glucanase</shortName>
        <ecNumber evidence="7 8 9">3.2.1.39</ecNumber>
    </recommendedName>
    <alternativeName>
        <fullName evidence="10">Laminarinase</fullName>
    </alternativeName>
</protein>
<dbReference type="EC" id="3.2.1.39" evidence="7 8 9"/>
<dbReference type="EMBL" id="BA000004">
    <property type="protein sequence ID" value="BAB03955.1"/>
    <property type="molecule type" value="Genomic_DNA"/>
</dbReference>
<dbReference type="PIR" id="D83679">
    <property type="entry name" value="D83679"/>
</dbReference>
<dbReference type="RefSeq" id="WP_010896418.1">
    <property type="nucleotide sequence ID" value="NC_002570.2"/>
</dbReference>
<dbReference type="PDB" id="1W9S">
    <property type="method" value="X-ray"/>
    <property type="resolution" value="1.59 A"/>
    <property type="chains" value="A/B=790-925"/>
</dbReference>
<dbReference type="PDB" id="1W9T">
    <property type="method" value="X-ray"/>
    <property type="resolution" value="1.62 A"/>
    <property type="chains" value="A/B=790-925"/>
</dbReference>
<dbReference type="PDB" id="1W9W">
    <property type="method" value="X-ray"/>
    <property type="resolution" value="2.10 A"/>
    <property type="chains" value="A=790-925"/>
</dbReference>
<dbReference type="PDB" id="5T49">
    <property type="method" value="X-ray"/>
    <property type="resolution" value="2.50 A"/>
    <property type="chains" value="A=28-789"/>
</dbReference>
<dbReference type="PDB" id="5T4A">
    <property type="method" value="X-ray"/>
    <property type="resolution" value="2.10 A"/>
    <property type="chains" value="A=28-789"/>
</dbReference>
<dbReference type="PDB" id="5T4C">
    <property type="method" value="X-ray"/>
    <property type="resolution" value="1.80 A"/>
    <property type="chains" value="A=28-789"/>
</dbReference>
<dbReference type="PDB" id="5T4G">
    <property type="method" value="X-ray"/>
    <property type="resolution" value="1.80 A"/>
    <property type="chains" value="A=28-789"/>
</dbReference>
<dbReference type="PDB" id="5T7A">
    <property type="method" value="X-ray"/>
    <property type="resolution" value="1.60 A"/>
    <property type="chains" value="A/B=926-1020"/>
</dbReference>
<dbReference type="PDB" id="5UPI">
    <property type="method" value="X-ray"/>
    <property type="resolution" value="1.65 A"/>
    <property type="chains" value="A=28-779"/>
</dbReference>
<dbReference type="PDB" id="5UPM">
    <property type="method" value="X-ray"/>
    <property type="resolution" value="1.70 A"/>
    <property type="chains" value="A=28-779"/>
</dbReference>
<dbReference type="PDB" id="5UPN">
    <property type="method" value="X-ray"/>
    <property type="resolution" value="1.80 A"/>
    <property type="chains" value="A=28-779"/>
</dbReference>
<dbReference type="PDB" id="5UPO">
    <property type="method" value="X-ray"/>
    <property type="resolution" value="1.70 A"/>
    <property type="chains" value="A=28-779"/>
</dbReference>
<dbReference type="PDB" id="5V1W">
    <property type="method" value="X-ray"/>
    <property type="resolution" value="2.15 A"/>
    <property type="chains" value="A=28-778"/>
</dbReference>
<dbReference type="PDBsum" id="1W9S"/>
<dbReference type="PDBsum" id="1W9T"/>
<dbReference type="PDBsum" id="1W9W"/>
<dbReference type="PDBsum" id="5T49"/>
<dbReference type="PDBsum" id="5T4A"/>
<dbReference type="PDBsum" id="5T4C"/>
<dbReference type="PDBsum" id="5T4G"/>
<dbReference type="PDBsum" id="5T7A"/>
<dbReference type="PDBsum" id="5UPI"/>
<dbReference type="PDBsum" id="5UPM"/>
<dbReference type="PDBsum" id="5UPN"/>
<dbReference type="PDBsum" id="5UPO"/>
<dbReference type="PDBsum" id="5V1W"/>
<dbReference type="SMR" id="Q9KG76"/>
<dbReference type="STRING" id="272558.gene:10726076"/>
<dbReference type="DrugBank" id="DB02379">
    <property type="generic name" value="Beta-D-Glucose"/>
</dbReference>
<dbReference type="CAZy" id="CBM56">
    <property type="family name" value="Carbohydrate-Binding Module Family 56"/>
</dbReference>
<dbReference type="CAZy" id="CBM6">
    <property type="family name" value="Carbohydrate-Binding Module Family 6"/>
</dbReference>
<dbReference type="CAZy" id="GH81">
    <property type="family name" value="Glycoside Hydrolase Family 81"/>
</dbReference>
<dbReference type="KEGG" id="bha:BH0236"/>
<dbReference type="eggNOG" id="COG5498">
    <property type="taxonomic scope" value="Bacteria"/>
</dbReference>
<dbReference type="HOGENOM" id="CLU_005482_1_0_9"/>
<dbReference type="OrthoDB" id="5480482at2"/>
<dbReference type="EvolutionaryTrace" id="Q9KG76"/>
<dbReference type="Proteomes" id="UP000001258">
    <property type="component" value="Chromosome"/>
</dbReference>
<dbReference type="GO" id="GO:0005576">
    <property type="term" value="C:extracellular region"/>
    <property type="evidence" value="ECO:0007669"/>
    <property type="project" value="UniProtKB-SubCell"/>
</dbReference>
<dbReference type="GO" id="GO:0030246">
    <property type="term" value="F:carbohydrate binding"/>
    <property type="evidence" value="ECO:0007669"/>
    <property type="project" value="InterPro"/>
</dbReference>
<dbReference type="GO" id="GO:0052861">
    <property type="term" value="F:endo-1,3(4)-beta-glucanase activity"/>
    <property type="evidence" value="ECO:0007669"/>
    <property type="project" value="UniProtKB-EC"/>
</dbReference>
<dbReference type="GO" id="GO:0042973">
    <property type="term" value="F:glucan endo-1,3-beta-D-glucosidase activity"/>
    <property type="evidence" value="ECO:0000314"/>
    <property type="project" value="UniProtKB"/>
</dbReference>
<dbReference type="GO" id="GO:0071555">
    <property type="term" value="P:cell wall organization"/>
    <property type="evidence" value="ECO:0007669"/>
    <property type="project" value="UniProtKB-KW"/>
</dbReference>
<dbReference type="GO" id="GO:0000272">
    <property type="term" value="P:polysaccharide catabolic process"/>
    <property type="evidence" value="ECO:0000314"/>
    <property type="project" value="UniProtKB"/>
</dbReference>
<dbReference type="CDD" id="cd04084">
    <property type="entry name" value="CBM6_xylanase-like"/>
    <property type="match status" value="1"/>
</dbReference>
<dbReference type="Gene3D" id="2.60.120.260">
    <property type="entry name" value="Galactose-binding domain-like"/>
    <property type="match status" value="1"/>
</dbReference>
<dbReference type="Gene3D" id="2.70.98.30">
    <property type="entry name" value="Golgi alpha-mannosidase II, domain 4"/>
    <property type="match status" value="1"/>
</dbReference>
<dbReference type="InterPro" id="IPR047569">
    <property type="entry name" value="CBM56"/>
</dbReference>
<dbReference type="InterPro" id="IPR005084">
    <property type="entry name" value="CBM6"/>
</dbReference>
<dbReference type="InterPro" id="IPR006584">
    <property type="entry name" value="Cellulose-bd_IV"/>
</dbReference>
<dbReference type="InterPro" id="IPR005200">
    <property type="entry name" value="Endo-beta-glucanase"/>
</dbReference>
<dbReference type="InterPro" id="IPR008979">
    <property type="entry name" value="Galactose-bd-like_sf"/>
</dbReference>
<dbReference type="InterPro" id="IPR040720">
    <property type="entry name" value="GH81_C"/>
</dbReference>
<dbReference type="InterPro" id="IPR040451">
    <property type="entry name" value="GH81_N"/>
</dbReference>
<dbReference type="PANTHER" id="PTHR31983">
    <property type="entry name" value="ENDO-1,3(4)-BETA-GLUCANASE 1"/>
    <property type="match status" value="1"/>
</dbReference>
<dbReference type="PANTHER" id="PTHR31983:SF0">
    <property type="entry name" value="GLUCAN ENDO-1,3-BETA-D-GLUCOSIDASE 2"/>
    <property type="match status" value="1"/>
</dbReference>
<dbReference type="Pfam" id="PF22184">
    <property type="entry name" value="CBM_56"/>
    <property type="match status" value="1"/>
</dbReference>
<dbReference type="Pfam" id="PF03422">
    <property type="entry name" value="CBM_6"/>
    <property type="match status" value="1"/>
</dbReference>
<dbReference type="Pfam" id="PF17652">
    <property type="entry name" value="Glyco_hydro81C"/>
    <property type="match status" value="1"/>
</dbReference>
<dbReference type="Pfam" id="PF03639">
    <property type="entry name" value="Glyco_hydro_81"/>
    <property type="match status" value="1"/>
</dbReference>
<dbReference type="SMART" id="SM00606">
    <property type="entry name" value="CBD_IV"/>
    <property type="match status" value="1"/>
</dbReference>
<dbReference type="SUPFAM" id="SSF49785">
    <property type="entry name" value="Galactose-binding domain-like"/>
    <property type="match status" value="1"/>
</dbReference>
<dbReference type="PROSITE" id="PS52005">
    <property type="entry name" value="CBM56"/>
    <property type="match status" value="1"/>
</dbReference>
<dbReference type="PROSITE" id="PS51175">
    <property type="entry name" value="CBM6"/>
    <property type="match status" value="1"/>
</dbReference>
<dbReference type="PROSITE" id="PS52008">
    <property type="entry name" value="GH81"/>
    <property type="match status" value="1"/>
</dbReference>
<proteinExistence type="evidence at protein level"/>
<name>ENG1_HALH5</name>